<feature type="chain" id="PRO_1000085396" description="N-succinylarginine dihydrolase">
    <location>
        <begin position="1"/>
        <end position="447"/>
    </location>
</feature>
<feature type="active site" evidence="1">
    <location>
        <position position="174"/>
    </location>
</feature>
<feature type="active site" evidence="1">
    <location>
        <position position="248"/>
    </location>
</feature>
<feature type="active site" description="Nucleophile" evidence="1">
    <location>
        <position position="365"/>
    </location>
</feature>
<feature type="binding site" evidence="1">
    <location>
        <begin position="19"/>
        <end position="28"/>
    </location>
    <ligand>
        <name>substrate</name>
    </ligand>
</feature>
<feature type="binding site" evidence="1">
    <location>
        <position position="110"/>
    </location>
    <ligand>
        <name>substrate</name>
    </ligand>
</feature>
<feature type="binding site" evidence="1">
    <location>
        <begin position="137"/>
        <end position="138"/>
    </location>
    <ligand>
        <name>substrate</name>
    </ligand>
</feature>
<feature type="binding site" evidence="1">
    <location>
        <position position="212"/>
    </location>
    <ligand>
        <name>substrate</name>
    </ligand>
</feature>
<feature type="binding site" evidence="1">
    <location>
        <position position="250"/>
    </location>
    <ligand>
        <name>substrate</name>
    </ligand>
</feature>
<feature type="binding site" evidence="1">
    <location>
        <position position="359"/>
    </location>
    <ligand>
        <name>substrate</name>
    </ligand>
</feature>
<keyword id="KW-0056">Arginine metabolism</keyword>
<keyword id="KW-0378">Hydrolase</keyword>
<protein>
    <recommendedName>
        <fullName evidence="1">N-succinylarginine dihydrolase</fullName>
        <ecNumber evidence="1">3.5.3.23</ecNumber>
    </recommendedName>
</protein>
<evidence type="ECO:0000255" key="1">
    <source>
        <dbReference type="HAMAP-Rule" id="MF_01172"/>
    </source>
</evidence>
<reference key="1">
    <citation type="submission" date="2007-11" db="EMBL/GenBank/DDBJ databases">
        <authorList>
            <consortium name="The Salmonella enterica serovar Paratyphi B Genome Sequencing Project"/>
            <person name="McClelland M."/>
            <person name="Sanderson E.K."/>
            <person name="Porwollik S."/>
            <person name="Spieth J."/>
            <person name="Clifton W.S."/>
            <person name="Fulton R."/>
            <person name="Cordes M."/>
            <person name="Wollam A."/>
            <person name="Shah N."/>
            <person name="Pepin K."/>
            <person name="Bhonagiri V."/>
            <person name="Nash W."/>
            <person name="Johnson M."/>
            <person name="Thiruvilangam P."/>
            <person name="Wilson R."/>
        </authorList>
    </citation>
    <scope>NUCLEOTIDE SEQUENCE [LARGE SCALE GENOMIC DNA]</scope>
    <source>
        <strain>ATCC BAA-1250 / SPB7</strain>
    </source>
</reference>
<organism>
    <name type="scientific">Salmonella paratyphi B (strain ATCC BAA-1250 / SPB7)</name>
    <dbReference type="NCBI Taxonomy" id="1016998"/>
    <lineage>
        <taxon>Bacteria</taxon>
        <taxon>Pseudomonadati</taxon>
        <taxon>Pseudomonadota</taxon>
        <taxon>Gammaproteobacteria</taxon>
        <taxon>Enterobacterales</taxon>
        <taxon>Enterobacteriaceae</taxon>
        <taxon>Salmonella</taxon>
    </lineage>
</organism>
<proteinExistence type="inferred from homology"/>
<dbReference type="EC" id="3.5.3.23" evidence="1"/>
<dbReference type="EMBL" id="CP000886">
    <property type="protein sequence ID" value="ABX67424.1"/>
    <property type="molecule type" value="Genomic_DNA"/>
</dbReference>
<dbReference type="RefSeq" id="WP_000123934.1">
    <property type="nucleotide sequence ID" value="NC_010102.1"/>
</dbReference>
<dbReference type="SMR" id="A9N275"/>
<dbReference type="KEGG" id="spq:SPAB_02037"/>
<dbReference type="PATRIC" id="fig|1016998.12.peg.1925"/>
<dbReference type="HOGENOM" id="CLU_053835_0_0_6"/>
<dbReference type="BioCyc" id="SENT1016998:SPAB_RS08315-MONOMER"/>
<dbReference type="UniPathway" id="UPA00185">
    <property type="reaction ID" value="UER00280"/>
</dbReference>
<dbReference type="Proteomes" id="UP000008556">
    <property type="component" value="Chromosome"/>
</dbReference>
<dbReference type="GO" id="GO:0009015">
    <property type="term" value="F:N-succinylarginine dihydrolase activity"/>
    <property type="evidence" value="ECO:0007669"/>
    <property type="project" value="UniProtKB-UniRule"/>
</dbReference>
<dbReference type="GO" id="GO:0019544">
    <property type="term" value="P:arginine catabolic process to glutamate"/>
    <property type="evidence" value="ECO:0007669"/>
    <property type="project" value="UniProtKB-UniRule"/>
</dbReference>
<dbReference type="GO" id="GO:0019545">
    <property type="term" value="P:arginine catabolic process to succinate"/>
    <property type="evidence" value="ECO:0007669"/>
    <property type="project" value="UniProtKB-UniRule"/>
</dbReference>
<dbReference type="FunFam" id="3.75.10.20:FF:000001">
    <property type="entry name" value="N-succinylarginine dihydrolase"/>
    <property type="match status" value="1"/>
</dbReference>
<dbReference type="Gene3D" id="3.75.10.20">
    <property type="entry name" value="Succinylarginine dihydrolase"/>
    <property type="match status" value="1"/>
</dbReference>
<dbReference type="HAMAP" id="MF_01172">
    <property type="entry name" value="AstB"/>
    <property type="match status" value="1"/>
</dbReference>
<dbReference type="InterPro" id="IPR037031">
    <property type="entry name" value="AstB_sf"/>
</dbReference>
<dbReference type="InterPro" id="IPR007079">
    <property type="entry name" value="SuccinylArg_d-Hdrlase_AstB"/>
</dbReference>
<dbReference type="NCBIfam" id="TIGR03241">
    <property type="entry name" value="arg_catab_astB"/>
    <property type="match status" value="1"/>
</dbReference>
<dbReference type="NCBIfam" id="NF009789">
    <property type="entry name" value="PRK13281.1"/>
    <property type="match status" value="1"/>
</dbReference>
<dbReference type="PANTHER" id="PTHR30420">
    <property type="entry name" value="N-SUCCINYLARGININE DIHYDROLASE"/>
    <property type="match status" value="1"/>
</dbReference>
<dbReference type="PANTHER" id="PTHR30420:SF2">
    <property type="entry name" value="N-SUCCINYLARGININE DIHYDROLASE"/>
    <property type="match status" value="1"/>
</dbReference>
<dbReference type="Pfam" id="PF04996">
    <property type="entry name" value="AstB"/>
    <property type="match status" value="1"/>
</dbReference>
<dbReference type="SUPFAM" id="SSF55909">
    <property type="entry name" value="Pentein"/>
    <property type="match status" value="1"/>
</dbReference>
<accession>A9N275</accession>
<gene>
    <name evidence="1" type="primary">astB</name>
    <name type="ordered locus">SPAB_02037</name>
</gene>
<comment type="function">
    <text evidence="1">Catalyzes the hydrolysis of N(2)-succinylarginine into N(2)-succinylornithine, ammonia and CO(2).</text>
</comment>
<comment type="catalytic activity">
    <reaction evidence="1">
        <text>N(2)-succinyl-L-arginine + 2 H2O + 2 H(+) = N(2)-succinyl-L-ornithine + 2 NH4(+) + CO2</text>
        <dbReference type="Rhea" id="RHEA:19533"/>
        <dbReference type="ChEBI" id="CHEBI:15377"/>
        <dbReference type="ChEBI" id="CHEBI:15378"/>
        <dbReference type="ChEBI" id="CHEBI:16526"/>
        <dbReference type="ChEBI" id="CHEBI:28938"/>
        <dbReference type="ChEBI" id="CHEBI:58241"/>
        <dbReference type="ChEBI" id="CHEBI:58514"/>
        <dbReference type="EC" id="3.5.3.23"/>
    </reaction>
</comment>
<comment type="pathway">
    <text evidence="1">Amino-acid degradation; L-arginine degradation via AST pathway; L-glutamate and succinate from L-arginine: step 2/5.</text>
</comment>
<comment type="subunit">
    <text evidence="1">Homodimer.</text>
</comment>
<comment type="similarity">
    <text evidence="1">Belongs to the succinylarginine dihydrolase family.</text>
</comment>
<sequence>MTAHEVNFDGLVGLTHHYAGLSFGNEASTRHRFQMSNPRLAVKQGLLKMKALADAGFPQAVIPPHERPFIPALRQLGFTGSDEQILDKVARQAPRWLSSVSSASPMWVANAATVCPSADALDGKVHLTVANLNNKFHRALEVPVTEALLRAIFRDESQFSVHSALPQVALLGDEGAANHNRLGGEYGSAGVQLFVYGREEENEIRPARYPARQSREASEAVARLNQVNPQQVIFAQQNPEVIDQGVFHNDVIAVSNRQVLFCHEAAFARQKVLINQLRTRVDGFMAIEVPAGEVSVSDAVATYLFNSQLLSRDDGSMLLVLPRECQDHAGVWRYLNKLVAEDNPISAMQVFDLRESMANGGGPACLRLRVVLTEEERRAVNPAVMMNDALFTALNAWADRYYRDRLTAADLADPLLLREGREALDVLTRLLDLGSVYPFQQTGAADG</sequence>
<name>ASTB_SALPB</name>